<feature type="chain" id="PRO_0000184561" description="S-methyl-5'-thioadenosine phosphorylase">
    <location>
        <begin position="1"/>
        <end position="257"/>
    </location>
</feature>
<feature type="binding site" evidence="1">
    <location>
        <position position="10"/>
    </location>
    <ligand>
        <name>phosphate</name>
        <dbReference type="ChEBI" id="CHEBI:43474"/>
    </ligand>
</feature>
<feature type="binding site" evidence="1">
    <location>
        <begin position="50"/>
        <end position="51"/>
    </location>
    <ligand>
        <name>phosphate</name>
        <dbReference type="ChEBI" id="CHEBI:43474"/>
    </ligand>
</feature>
<feature type="binding site" evidence="1">
    <location>
        <position position="180"/>
    </location>
    <ligand>
        <name>substrate</name>
    </ligand>
</feature>
<feature type="binding site" evidence="1">
    <location>
        <position position="181"/>
    </location>
    <ligand>
        <name>phosphate</name>
        <dbReference type="ChEBI" id="CHEBI:43474"/>
    </ligand>
</feature>
<feature type="binding site" evidence="1">
    <location>
        <begin position="204"/>
        <end position="206"/>
    </location>
    <ligand>
        <name>substrate</name>
    </ligand>
</feature>
<feature type="site" description="Important for substrate specificity" evidence="1">
    <location>
        <position position="163"/>
    </location>
</feature>
<feature type="site" description="Important for substrate specificity" evidence="1">
    <location>
        <position position="215"/>
    </location>
</feature>
<accession>O57865</accession>
<gene>
    <name evidence="1" type="primary">mtnP</name>
    <name type="ordered locus">PH0125</name>
</gene>
<comment type="function">
    <text evidence="1">Catalyzes the reversible phosphorylation of S-methyl-5'-thioadenosine (MTA) to adenine and 5-methylthioribose-1-phosphate. Involved in the breakdown of MTA, a major by-product of polyamine biosynthesis. Responsible for the first step in the methionine salvage pathway after MTA has been generated from S-adenosylmethionine. Has broad substrate specificity with 6-aminopurine nucleosides as preferred substrates.</text>
</comment>
<comment type="catalytic activity">
    <reaction evidence="1">
        <text>S-methyl-5'-thioadenosine + phosphate = 5-(methylsulfanyl)-alpha-D-ribose 1-phosphate + adenine</text>
        <dbReference type="Rhea" id="RHEA:11852"/>
        <dbReference type="ChEBI" id="CHEBI:16708"/>
        <dbReference type="ChEBI" id="CHEBI:17509"/>
        <dbReference type="ChEBI" id="CHEBI:43474"/>
        <dbReference type="ChEBI" id="CHEBI:58533"/>
        <dbReference type="EC" id="2.4.2.28"/>
    </reaction>
</comment>
<comment type="pathway">
    <text evidence="1">Amino-acid biosynthesis; L-methionine biosynthesis via salvage pathway; S-methyl-5-thio-alpha-D-ribose 1-phosphate from S-methyl-5'-thioadenosine (phosphorylase route): step 1/1.</text>
</comment>
<comment type="subunit">
    <text evidence="1">Homohexamer. Dimer of a homotrimer.</text>
</comment>
<comment type="similarity">
    <text evidence="1">Belongs to the PNP/MTAP phosphorylase family. MTAP subfamily.</text>
</comment>
<comment type="sequence caution" evidence="2">
    <conflict type="erroneous initiation">
        <sequence resource="EMBL-CDS" id="BAA29194"/>
    </conflict>
    <text>Extended N-terminus.</text>
</comment>
<dbReference type="EC" id="2.4.2.28" evidence="1"/>
<dbReference type="EMBL" id="BA000001">
    <property type="protein sequence ID" value="BAA29194.1"/>
    <property type="status" value="ALT_INIT"/>
    <property type="molecule type" value="Genomic_DNA"/>
</dbReference>
<dbReference type="PIR" id="C71233">
    <property type="entry name" value="C71233"/>
</dbReference>
<dbReference type="RefSeq" id="WP_048053039.1">
    <property type="nucleotide sequence ID" value="NC_000961.1"/>
</dbReference>
<dbReference type="SMR" id="O57865"/>
<dbReference type="MINT" id="O57865"/>
<dbReference type="STRING" id="70601.gene:9377033"/>
<dbReference type="EnsemblBacteria" id="BAA29194">
    <property type="protein sequence ID" value="BAA29194"/>
    <property type="gene ID" value="BAA29194"/>
</dbReference>
<dbReference type="GeneID" id="1444021"/>
<dbReference type="KEGG" id="pho:PH0125"/>
<dbReference type="eggNOG" id="arCOG01327">
    <property type="taxonomic scope" value="Archaea"/>
</dbReference>
<dbReference type="OrthoDB" id="7681at2157"/>
<dbReference type="UniPathway" id="UPA00904">
    <property type="reaction ID" value="UER00873"/>
</dbReference>
<dbReference type="Proteomes" id="UP000000752">
    <property type="component" value="Chromosome"/>
</dbReference>
<dbReference type="GO" id="GO:0005829">
    <property type="term" value="C:cytosol"/>
    <property type="evidence" value="ECO:0007669"/>
    <property type="project" value="TreeGrafter"/>
</dbReference>
<dbReference type="GO" id="GO:0017061">
    <property type="term" value="F:S-methyl-5-thioadenosine phosphorylase activity"/>
    <property type="evidence" value="ECO:0007669"/>
    <property type="project" value="UniProtKB-UniRule"/>
</dbReference>
<dbReference type="GO" id="GO:0019509">
    <property type="term" value="P:L-methionine salvage from methylthioadenosine"/>
    <property type="evidence" value="ECO:0007669"/>
    <property type="project" value="UniProtKB-UniRule"/>
</dbReference>
<dbReference type="GO" id="GO:0006166">
    <property type="term" value="P:purine ribonucleoside salvage"/>
    <property type="evidence" value="ECO:0007669"/>
    <property type="project" value="UniProtKB-KW"/>
</dbReference>
<dbReference type="CDD" id="cd09010">
    <property type="entry name" value="MTAP_SsMTAPII_like_MTIP"/>
    <property type="match status" value="1"/>
</dbReference>
<dbReference type="FunFam" id="3.40.50.1580:FF:000012">
    <property type="entry name" value="Probable 6-oxopurine nucleoside phosphorylase"/>
    <property type="match status" value="1"/>
</dbReference>
<dbReference type="Gene3D" id="3.40.50.1580">
    <property type="entry name" value="Nucleoside phosphorylase domain"/>
    <property type="match status" value="1"/>
</dbReference>
<dbReference type="HAMAP" id="MF_01963">
    <property type="entry name" value="MTAP"/>
    <property type="match status" value="1"/>
</dbReference>
<dbReference type="InterPro" id="IPR010044">
    <property type="entry name" value="MTAP"/>
</dbReference>
<dbReference type="InterPro" id="IPR000845">
    <property type="entry name" value="Nucleoside_phosphorylase_d"/>
</dbReference>
<dbReference type="InterPro" id="IPR035994">
    <property type="entry name" value="Nucleoside_phosphorylase_sf"/>
</dbReference>
<dbReference type="InterPro" id="IPR018099">
    <property type="entry name" value="Purine_phosphorylase-2_CS"/>
</dbReference>
<dbReference type="NCBIfam" id="TIGR01694">
    <property type="entry name" value="MTAP"/>
    <property type="match status" value="1"/>
</dbReference>
<dbReference type="NCBIfam" id="NF006334">
    <property type="entry name" value="PRK08564.1"/>
    <property type="match status" value="1"/>
</dbReference>
<dbReference type="NCBIfam" id="NF006599">
    <property type="entry name" value="PRK09136.1"/>
    <property type="match status" value="1"/>
</dbReference>
<dbReference type="PANTHER" id="PTHR42679">
    <property type="entry name" value="S-METHYL-5'-THIOADENOSINE PHOSPHORYLASE"/>
    <property type="match status" value="1"/>
</dbReference>
<dbReference type="PANTHER" id="PTHR42679:SF3">
    <property type="entry name" value="S-METHYL-5'-THIOADENOSINE PHOSPHORYLASE"/>
    <property type="match status" value="1"/>
</dbReference>
<dbReference type="Pfam" id="PF01048">
    <property type="entry name" value="PNP_UDP_1"/>
    <property type="match status" value="1"/>
</dbReference>
<dbReference type="SUPFAM" id="SSF53167">
    <property type="entry name" value="Purine and uridine phosphorylases"/>
    <property type="match status" value="1"/>
</dbReference>
<dbReference type="PROSITE" id="PS01240">
    <property type="entry name" value="PNP_MTAP_2"/>
    <property type="match status" value="1"/>
</dbReference>
<name>MTAP_PYRHO</name>
<sequence length="257" mass="29175">MPKIGIIGGSGVYGVFEPKEVVKVHTPYGRPSAPIEIGEIEGVEVAFIPRHGKYHEFPPHQVPYRANIWALHELGVERVIAINAVGSLKEEYKPGDIVIIDQFIDFTKKREYTFYNGPKVAHVSMADPFCPELRKIFIETAKELNLPVHERGTYVCIEGPRFSTRAESRMFRQFADVIGMTLVPEVNLARELGMCYVNISTVTDYDVWAEKPVDAQEVLRVMKENEEKVQKLLKRAIPKIPEERKCGCADVLKTMFV</sequence>
<evidence type="ECO:0000255" key="1">
    <source>
        <dbReference type="HAMAP-Rule" id="MF_01963"/>
    </source>
</evidence>
<evidence type="ECO:0000305" key="2"/>
<protein>
    <recommendedName>
        <fullName evidence="1">S-methyl-5'-thioadenosine phosphorylase</fullName>
        <ecNumber evidence="1">2.4.2.28</ecNumber>
    </recommendedName>
    <alternativeName>
        <fullName evidence="1">5'-methylthioadenosine phosphorylase</fullName>
        <shortName evidence="1">MTA phosphorylase</shortName>
        <shortName evidence="1">MTAP</shortName>
    </alternativeName>
</protein>
<keyword id="KW-0328">Glycosyltransferase</keyword>
<keyword id="KW-0660">Purine salvage</keyword>
<keyword id="KW-0808">Transferase</keyword>
<reference key="1">
    <citation type="journal article" date="1998" name="DNA Res.">
        <title>Complete sequence and gene organization of the genome of a hyper-thermophilic archaebacterium, Pyrococcus horikoshii OT3.</title>
        <authorList>
            <person name="Kawarabayasi Y."/>
            <person name="Sawada M."/>
            <person name="Horikawa H."/>
            <person name="Haikawa Y."/>
            <person name="Hino Y."/>
            <person name="Yamamoto S."/>
            <person name="Sekine M."/>
            <person name="Baba S."/>
            <person name="Kosugi H."/>
            <person name="Hosoyama A."/>
            <person name="Nagai Y."/>
            <person name="Sakai M."/>
            <person name="Ogura K."/>
            <person name="Otsuka R."/>
            <person name="Nakazawa H."/>
            <person name="Takamiya M."/>
            <person name="Ohfuku Y."/>
            <person name="Funahashi T."/>
            <person name="Tanaka T."/>
            <person name="Kudoh Y."/>
            <person name="Yamazaki J."/>
            <person name="Kushida N."/>
            <person name="Oguchi A."/>
            <person name="Aoki K."/>
            <person name="Yoshizawa T."/>
            <person name="Nakamura Y."/>
            <person name="Robb F.T."/>
            <person name="Horikoshi K."/>
            <person name="Masuchi Y."/>
            <person name="Shizuya H."/>
            <person name="Kikuchi H."/>
        </authorList>
    </citation>
    <scope>NUCLEOTIDE SEQUENCE [LARGE SCALE GENOMIC DNA]</scope>
    <source>
        <strain>ATCC 700860 / DSM 12428 / JCM 9974 / NBRC 100139 / OT-3</strain>
    </source>
</reference>
<proteinExistence type="inferred from homology"/>
<organism>
    <name type="scientific">Pyrococcus horikoshii (strain ATCC 700860 / DSM 12428 / JCM 9974 / NBRC 100139 / OT-3)</name>
    <dbReference type="NCBI Taxonomy" id="70601"/>
    <lineage>
        <taxon>Archaea</taxon>
        <taxon>Methanobacteriati</taxon>
        <taxon>Methanobacteriota</taxon>
        <taxon>Thermococci</taxon>
        <taxon>Thermococcales</taxon>
        <taxon>Thermococcaceae</taxon>
        <taxon>Pyrococcus</taxon>
    </lineage>
</organism>